<evidence type="ECO:0000255" key="1">
    <source>
        <dbReference type="PROSITE-ProRule" id="PRU00042"/>
    </source>
</evidence>
<evidence type="ECO:0000255" key="2">
    <source>
        <dbReference type="PROSITE-ProRule" id="PRU00119"/>
    </source>
</evidence>
<evidence type="ECO:0000256" key="3">
    <source>
        <dbReference type="SAM" id="MobiDB-lite"/>
    </source>
</evidence>
<evidence type="ECO:0000269" key="4">
    <source>
    </source>
</evidence>
<evidence type="ECO:0000269" key="5">
    <source>
    </source>
</evidence>
<evidence type="ECO:0000305" key="6"/>
<organism>
    <name type="scientific">Homo sapiens</name>
    <name type="common">Human</name>
    <dbReference type="NCBI Taxonomy" id="9606"/>
    <lineage>
        <taxon>Eukaryota</taxon>
        <taxon>Metazoa</taxon>
        <taxon>Chordata</taxon>
        <taxon>Craniata</taxon>
        <taxon>Vertebrata</taxon>
        <taxon>Euteleostomi</taxon>
        <taxon>Mammalia</taxon>
        <taxon>Eutheria</taxon>
        <taxon>Euarchontoglires</taxon>
        <taxon>Primates</taxon>
        <taxon>Haplorrhini</taxon>
        <taxon>Catarrhini</taxon>
        <taxon>Hominidae</taxon>
        <taxon>Homo</taxon>
    </lineage>
</organism>
<accession>Q08ER8</accession>
<accession>Q495U9</accession>
<accession>Q495V0</accession>
<accession>Q6ZMP4</accession>
<accession>Q8NCX4</accession>
<gene>
    <name type="primary">ZNF543</name>
</gene>
<keyword id="KW-0238">DNA-binding</keyword>
<keyword id="KW-0479">Metal-binding</keyword>
<keyword id="KW-0539">Nucleus</keyword>
<keyword id="KW-1267">Proteomics identification</keyword>
<keyword id="KW-1185">Reference proteome</keyword>
<keyword id="KW-0677">Repeat</keyword>
<keyword id="KW-0804">Transcription</keyword>
<keyword id="KW-0805">Transcription regulation</keyword>
<keyword id="KW-0862">Zinc</keyword>
<keyword id="KW-0863">Zinc-finger</keyword>
<protein>
    <recommendedName>
        <fullName>Zinc finger protein 543</fullName>
    </recommendedName>
</protein>
<dbReference type="EMBL" id="AK131547">
    <property type="protein sequence ID" value="BAD18681.1"/>
    <property type="molecule type" value="mRNA"/>
</dbReference>
<dbReference type="EMBL" id="AC005261">
    <property type="status" value="NOT_ANNOTATED_CDS"/>
    <property type="molecule type" value="Genomic_DNA"/>
</dbReference>
<dbReference type="EMBL" id="BC101012">
    <property type="protein sequence ID" value="AAI01013.1"/>
    <property type="molecule type" value="mRNA"/>
</dbReference>
<dbReference type="EMBL" id="BC101013">
    <property type="protein sequence ID" value="AAI01014.1"/>
    <property type="molecule type" value="mRNA"/>
</dbReference>
<dbReference type="EMBL" id="BC101014">
    <property type="protein sequence ID" value="AAI01015.1"/>
    <property type="molecule type" value="mRNA"/>
</dbReference>
<dbReference type="EMBL" id="BC101015">
    <property type="protein sequence ID" value="AAI01016.1"/>
    <property type="molecule type" value="mRNA"/>
</dbReference>
<dbReference type="EMBL" id="AL834534">
    <property type="protein sequence ID" value="CAD39190.1"/>
    <property type="molecule type" value="mRNA"/>
</dbReference>
<dbReference type="CCDS" id="CCDS33130.1"/>
<dbReference type="RefSeq" id="NP_998763.2">
    <property type="nucleotide sequence ID" value="NM_213598.4"/>
</dbReference>
<dbReference type="SMR" id="Q08ER8"/>
<dbReference type="BioGRID" id="125934">
    <property type="interactions" value="23"/>
</dbReference>
<dbReference type="FunCoup" id="Q08ER8">
    <property type="interactions" value="7"/>
</dbReference>
<dbReference type="IntAct" id="Q08ER8">
    <property type="interactions" value="22"/>
</dbReference>
<dbReference type="STRING" id="9606.ENSP00000322545"/>
<dbReference type="iPTMnet" id="Q08ER8"/>
<dbReference type="PhosphoSitePlus" id="Q08ER8"/>
<dbReference type="BioMuta" id="ZNF543"/>
<dbReference type="DMDM" id="313104258"/>
<dbReference type="jPOST" id="Q08ER8"/>
<dbReference type="MassIVE" id="Q08ER8"/>
<dbReference type="PaxDb" id="9606-ENSP00000322545"/>
<dbReference type="PeptideAtlas" id="Q08ER8"/>
<dbReference type="ProteomicsDB" id="58695"/>
<dbReference type="Antibodypedia" id="33243">
    <property type="antibodies" value="110 antibodies from 17 providers"/>
</dbReference>
<dbReference type="DNASU" id="125919"/>
<dbReference type="Ensembl" id="ENST00000321545.5">
    <property type="protein sequence ID" value="ENSP00000322545.3"/>
    <property type="gene ID" value="ENSG00000178229.8"/>
</dbReference>
<dbReference type="GeneID" id="125919"/>
<dbReference type="KEGG" id="hsa:125919"/>
<dbReference type="MANE-Select" id="ENST00000321545.5">
    <property type="protein sequence ID" value="ENSP00000322545.3"/>
    <property type="RefSeq nucleotide sequence ID" value="NM_213598.4"/>
    <property type="RefSeq protein sequence ID" value="NP_998763.2"/>
</dbReference>
<dbReference type="UCSC" id="uc002qoi.3">
    <property type="organism name" value="human"/>
</dbReference>
<dbReference type="AGR" id="HGNC:25281"/>
<dbReference type="CTD" id="125919"/>
<dbReference type="DisGeNET" id="125919"/>
<dbReference type="GeneCards" id="ZNF543"/>
<dbReference type="HGNC" id="HGNC:25281">
    <property type="gene designation" value="ZNF543"/>
</dbReference>
<dbReference type="HPA" id="ENSG00000178229">
    <property type="expression patterns" value="Low tissue specificity"/>
</dbReference>
<dbReference type="MIM" id="616847">
    <property type="type" value="gene"/>
</dbReference>
<dbReference type="neXtProt" id="NX_Q08ER8"/>
<dbReference type="PharmGKB" id="PA134914064"/>
<dbReference type="VEuPathDB" id="HostDB:ENSG00000178229"/>
<dbReference type="eggNOG" id="KOG1721">
    <property type="taxonomic scope" value="Eukaryota"/>
</dbReference>
<dbReference type="GeneTree" id="ENSGT00940000161437"/>
<dbReference type="HOGENOM" id="CLU_002678_44_5_1"/>
<dbReference type="InParanoid" id="Q08ER8"/>
<dbReference type="OMA" id="QELWMAT"/>
<dbReference type="OrthoDB" id="6591996at2759"/>
<dbReference type="PAN-GO" id="Q08ER8">
    <property type="GO annotations" value="4 GO annotations based on evolutionary models"/>
</dbReference>
<dbReference type="PhylomeDB" id="Q08ER8"/>
<dbReference type="TreeFam" id="TF341817"/>
<dbReference type="PathwayCommons" id="Q08ER8"/>
<dbReference type="Reactome" id="R-HSA-212436">
    <property type="pathway name" value="Generic Transcription Pathway"/>
</dbReference>
<dbReference type="SignaLink" id="Q08ER8"/>
<dbReference type="BioGRID-ORCS" id="125919">
    <property type="hits" value="15 hits in 1178 CRISPR screens"/>
</dbReference>
<dbReference type="ChiTaRS" id="ZNF543">
    <property type="organism name" value="human"/>
</dbReference>
<dbReference type="GenomeRNAi" id="125919"/>
<dbReference type="Pharos" id="Q08ER8">
    <property type="development level" value="Tdark"/>
</dbReference>
<dbReference type="PRO" id="PR:Q08ER8"/>
<dbReference type="Proteomes" id="UP000005640">
    <property type="component" value="Chromosome 19"/>
</dbReference>
<dbReference type="RNAct" id="Q08ER8">
    <property type="molecule type" value="protein"/>
</dbReference>
<dbReference type="Bgee" id="ENSG00000178229">
    <property type="expression patterns" value="Expressed in male germ line stem cell (sensu Vertebrata) in testis and 113 other cell types or tissues"/>
</dbReference>
<dbReference type="GO" id="GO:0005634">
    <property type="term" value="C:nucleus"/>
    <property type="evidence" value="ECO:0000318"/>
    <property type="project" value="GO_Central"/>
</dbReference>
<dbReference type="GO" id="GO:0000981">
    <property type="term" value="F:DNA-binding transcription factor activity, RNA polymerase II-specific"/>
    <property type="evidence" value="ECO:0000318"/>
    <property type="project" value="GO_Central"/>
</dbReference>
<dbReference type="GO" id="GO:0000978">
    <property type="term" value="F:RNA polymerase II cis-regulatory region sequence-specific DNA binding"/>
    <property type="evidence" value="ECO:0000318"/>
    <property type="project" value="GO_Central"/>
</dbReference>
<dbReference type="GO" id="GO:0008270">
    <property type="term" value="F:zinc ion binding"/>
    <property type="evidence" value="ECO:0007669"/>
    <property type="project" value="UniProtKB-KW"/>
</dbReference>
<dbReference type="GO" id="GO:0006357">
    <property type="term" value="P:regulation of transcription by RNA polymerase II"/>
    <property type="evidence" value="ECO:0000318"/>
    <property type="project" value="GO_Central"/>
</dbReference>
<dbReference type="CDD" id="cd07765">
    <property type="entry name" value="KRAB_A-box"/>
    <property type="match status" value="1"/>
</dbReference>
<dbReference type="FunFam" id="3.30.160.60:FF:000478">
    <property type="entry name" value="Zinc finger protein 133"/>
    <property type="match status" value="1"/>
</dbReference>
<dbReference type="FunFam" id="3.30.160.60:FF:000005">
    <property type="entry name" value="Zinc finger protein 14 homolog"/>
    <property type="match status" value="1"/>
</dbReference>
<dbReference type="FunFam" id="3.30.160.60:FF:000020">
    <property type="entry name" value="Zinc finger protein 14 homolog"/>
    <property type="match status" value="1"/>
</dbReference>
<dbReference type="FunFam" id="3.30.160.60:FF:000352">
    <property type="entry name" value="zinc finger protein 3 homolog"/>
    <property type="match status" value="1"/>
</dbReference>
<dbReference type="FunFam" id="3.30.160.60:FF:000561">
    <property type="entry name" value="Zinc finger protein 30 homolog"/>
    <property type="match status" value="1"/>
</dbReference>
<dbReference type="FunFam" id="3.30.160.60:FF:002343">
    <property type="entry name" value="Zinc finger protein 33A"/>
    <property type="match status" value="1"/>
</dbReference>
<dbReference type="FunFam" id="3.30.160.60:FF:001291">
    <property type="entry name" value="Zinc finger protein 354C"/>
    <property type="match status" value="1"/>
</dbReference>
<dbReference type="FunFam" id="3.30.160.60:FF:002090">
    <property type="entry name" value="Zinc finger protein 473"/>
    <property type="match status" value="1"/>
</dbReference>
<dbReference type="FunFam" id="3.30.160.60:FF:002254">
    <property type="entry name" value="Zinc finger protein 540"/>
    <property type="match status" value="1"/>
</dbReference>
<dbReference type="FunFam" id="3.30.160.60:FF:000737">
    <property type="entry name" value="Zinc finger protein 565"/>
    <property type="match status" value="1"/>
</dbReference>
<dbReference type="FunFam" id="3.30.160.60:FF:001697">
    <property type="entry name" value="zinc finger protein 623"/>
    <property type="match status" value="1"/>
</dbReference>
<dbReference type="FunFam" id="3.30.160.60:FF:000493">
    <property type="entry name" value="Zinc finger protein 805"/>
    <property type="match status" value="1"/>
</dbReference>
<dbReference type="FunFam" id="3.30.160.60:FF:000896">
    <property type="entry name" value="Zinc finger protein 805"/>
    <property type="match status" value="1"/>
</dbReference>
<dbReference type="Gene3D" id="6.10.140.140">
    <property type="match status" value="1"/>
</dbReference>
<dbReference type="Gene3D" id="3.30.160.60">
    <property type="entry name" value="Classic Zinc Finger"/>
    <property type="match status" value="13"/>
</dbReference>
<dbReference type="InterPro" id="IPR001909">
    <property type="entry name" value="KRAB"/>
</dbReference>
<dbReference type="InterPro" id="IPR036051">
    <property type="entry name" value="KRAB_dom_sf"/>
</dbReference>
<dbReference type="InterPro" id="IPR036236">
    <property type="entry name" value="Znf_C2H2_sf"/>
</dbReference>
<dbReference type="InterPro" id="IPR013087">
    <property type="entry name" value="Znf_C2H2_type"/>
</dbReference>
<dbReference type="PANTHER" id="PTHR24381">
    <property type="entry name" value="ZINC FINGER PROTEIN"/>
    <property type="match status" value="1"/>
</dbReference>
<dbReference type="PANTHER" id="PTHR24381:SF154">
    <property type="entry name" value="ZINC FINGER PROTEIN 550"/>
    <property type="match status" value="1"/>
</dbReference>
<dbReference type="Pfam" id="PF01352">
    <property type="entry name" value="KRAB"/>
    <property type="match status" value="1"/>
</dbReference>
<dbReference type="Pfam" id="PF00096">
    <property type="entry name" value="zf-C2H2"/>
    <property type="match status" value="13"/>
</dbReference>
<dbReference type="SMART" id="SM00349">
    <property type="entry name" value="KRAB"/>
    <property type="match status" value="1"/>
</dbReference>
<dbReference type="SMART" id="SM00355">
    <property type="entry name" value="ZnF_C2H2"/>
    <property type="match status" value="13"/>
</dbReference>
<dbReference type="SUPFAM" id="SSF57667">
    <property type="entry name" value="beta-beta-alpha zinc fingers"/>
    <property type="match status" value="7"/>
</dbReference>
<dbReference type="SUPFAM" id="SSF109640">
    <property type="entry name" value="KRAB domain (Kruppel-associated box)"/>
    <property type="match status" value="1"/>
</dbReference>
<dbReference type="PROSITE" id="PS50805">
    <property type="entry name" value="KRAB"/>
    <property type="match status" value="1"/>
</dbReference>
<dbReference type="PROSITE" id="PS00028">
    <property type="entry name" value="ZINC_FINGER_C2H2_1"/>
    <property type="match status" value="13"/>
</dbReference>
<dbReference type="PROSITE" id="PS50157">
    <property type="entry name" value="ZINC_FINGER_C2H2_2"/>
    <property type="match status" value="13"/>
</dbReference>
<name>ZN543_HUMAN</name>
<sequence length="600" mass="68404">MAASAQVSVTFEDVAVTFTQEEWGQLDAAQRTLYQEVMLETCGLLMSLGCPLFKPELIYQLDHRQELWMATKDLSQSSYPGDNTKPKTTEPTFSHLALPEEVLLQEQLTQGASKNSQLGQSKDQDGPSEMQEVHLKIGIGPQRGKLLEKMSSERDGLGSDDGVCTKITQKQVSTEGDLYECDSHGPVTDALIREEKNSYKCEECGKVFKKNALLVQHERIHTQVKPYECTECGKTFSKSTHLLQHLIIHTGEKPYKCMECGKAFNRRSHLTRHQRIHSGEKPYKCSECGKAFTHRSTFVLHHRSHTGEKPFVCKECGKAFRDRPGFIRHYIIHTGEKPYECIECGKAFNRRSYLTWHQQIHTGVKPFECNECGKAFCESADLIQHYIIHTGEKPYKCMECGKAFNRRSHLKQHQRIHTGEKPYECSECGKAFTHCSTFVLHKRTHTGEKPYECKECGKAFSDRADLIRHFSIHTGEKPYECVECGKAFNRSSHLTRHQQIHTGEKPYECIQCGKAFCRSANLIRHSIIHTGEKPYECSECGKAFNRGSSLTHHQRIHTGRNPTIVTDVGRPFMTAQTSVNIQELLLGKEFLNITTEENLW</sequence>
<proteinExistence type="evidence at protein level"/>
<comment type="function">
    <text>May be involved in transcriptional regulation.</text>
</comment>
<comment type="interaction">
    <interactant intactId="EBI-10226133">
        <id>Q08ER8</id>
    </interactant>
    <interactant intactId="EBI-12012928">
        <id>P60371</id>
        <label>KRTAP10-6</label>
    </interactant>
    <organismsDiffer>false</organismsDiffer>
    <experiments>3</experiments>
</comment>
<comment type="interaction">
    <interactant intactId="EBI-10226133">
        <id>Q08ER8</id>
    </interactant>
    <interactant intactId="EBI-10172290">
        <id>P60409</id>
        <label>KRTAP10-7</label>
    </interactant>
    <organismsDiffer>false</organismsDiffer>
    <experiments>3</experiments>
</comment>
<comment type="interaction">
    <interactant intactId="EBI-10226133">
        <id>Q08ER8</id>
    </interactant>
    <interactant intactId="EBI-307531">
        <id>P23508</id>
        <label>MCC</label>
    </interactant>
    <organismsDiffer>false</organismsDiffer>
    <experiments>3</experiments>
</comment>
<comment type="subcellular location">
    <subcellularLocation>
        <location evidence="6">Nucleus</location>
    </subcellularLocation>
</comment>
<comment type="similarity">
    <text evidence="6">Belongs to the krueppel C2H2-type zinc-finger protein family.</text>
</comment>
<feature type="chain" id="PRO_0000286809" description="Zinc finger protein 543">
    <location>
        <begin position="1"/>
        <end position="600"/>
    </location>
</feature>
<feature type="domain" description="KRAB" evidence="2">
    <location>
        <begin position="9"/>
        <end position="80"/>
    </location>
</feature>
<feature type="zinc finger region" description="C2H2-type 1" evidence="1">
    <location>
        <begin position="199"/>
        <end position="221"/>
    </location>
</feature>
<feature type="zinc finger region" description="C2H2-type 2" evidence="1">
    <location>
        <begin position="227"/>
        <end position="249"/>
    </location>
</feature>
<feature type="zinc finger region" description="C2H2-type 3" evidence="1">
    <location>
        <begin position="255"/>
        <end position="277"/>
    </location>
</feature>
<feature type="zinc finger region" description="C2H2-type 4" evidence="1">
    <location>
        <begin position="283"/>
        <end position="305"/>
    </location>
</feature>
<feature type="zinc finger region" description="C2H2-type 5" evidence="1">
    <location>
        <begin position="311"/>
        <end position="333"/>
    </location>
</feature>
<feature type="zinc finger region" description="C2H2-type 6" evidence="1">
    <location>
        <begin position="339"/>
        <end position="361"/>
    </location>
</feature>
<feature type="zinc finger region" description="C2H2-type 7" evidence="1">
    <location>
        <begin position="367"/>
        <end position="389"/>
    </location>
</feature>
<feature type="zinc finger region" description="C2H2-type 8" evidence="1">
    <location>
        <begin position="395"/>
        <end position="417"/>
    </location>
</feature>
<feature type="zinc finger region" description="C2H2-type 9" evidence="1">
    <location>
        <begin position="423"/>
        <end position="445"/>
    </location>
</feature>
<feature type="zinc finger region" description="C2H2-type 10" evidence="1">
    <location>
        <begin position="451"/>
        <end position="473"/>
    </location>
</feature>
<feature type="zinc finger region" description="C2H2-type 11" evidence="1">
    <location>
        <begin position="479"/>
        <end position="501"/>
    </location>
</feature>
<feature type="zinc finger region" description="C2H2-type 12" evidence="1">
    <location>
        <begin position="507"/>
        <end position="529"/>
    </location>
</feature>
<feature type="zinc finger region" description="C2H2-type 13" evidence="1">
    <location>
        <begin position="535"/>
        <end position="557"/>
    </location>
</feature>
<feature type="region of interest" description="Disordered" evidence="3">
    <location>
        <begin position="110"/>
        <end position="131"/>
    </location>
</feature>
<feature type="compositionally biased region" description="Polar residues" evidence="3">
    <location>
        <begin position="110"/>
        <end position="121"/>
    </location>
</feature>
<feature type="sequence variant" id="VAR_032171" description="In dbSNP:rs6510057." evidence="4 5">
    <original>P</original>
    <variation>A</variation>
    <location>
        <position position="55"/>
    </location>
</feature>
<feature type="sequence variant" id="VAR_032172" description="In dbSNP:rs8100491." evidence="4 5">
    <original>Q</original>
    <variation>R</variation>
    <location>
        <position position="107"/>
    </location>
</feature>
<feature type="sequence variant" id="VAR_032173" description="In dbSNP:rs1968090." evidence="4 5">
    <original>L</original>
    <variation>H</variation>
    <location>
        <position position="246"/>
    </location>
</feature>
<feature type="sequence variant" id="VAR_032174" description="In dbSNP:rs35238720." evidence="4">
    <original>E</original>
    <variation>V</variation>
    <location>
        <position position="287"/>
    </location>
</feature>
<feature type="sequence variant" id="VAR_032175" description="In dbSNP:rs10411486.">
    <original>V</original>
    <variation>D</variation>
    <location>
        <position position="439"/>
    </location>
</feature>
<feature type="sequence variant" id="VAR_032176" description="In dbSNP:rs10410649.">
    <original>M</original>
    <variation>V</variation>
    <location>
        <position position="573"/>
    </location>
</feature>
<feature type="sequence conflict" description="In Ref. 1; BAD18681." evidence="6" ref="1">
    <original>F</original>
    <variation>L</variation>
    <location>
        <position position="470"/>
    </location>
</feature>
<reference key="1">
    <citation type="journal article" date="2004" name="Nat. Genet.">
        <title>Complete sequencing and characterization of 21,243 full-length human cDNAs.</title>
        <authorList>
            <person name="Ota T."/>
            <person name="Suzuki Y."/>
            <person name="Nishikawa T."/>
            <person name="Otsuki T."/>
            <person name="Sugiyama T."/>
            <person name="Irie R."/>
            <person name="Wakamatsu A."/>
            <person name="Hayashi K."/>
            <person name="Sato H."/>
            <person name="Nagai K."/>
            <person name="Kimura K."/>
            <person name="Makita H."/>
            <person name="Sekine M."/>
            <person name="Obayashi M."/>
            <person name="Nishi T."/>
            <person name="Shibahara T."/>
            <person name="Tanaka T."/>
            <person name="Ishii S."/>
            <person name="Yamamoto J."/>
            <person name="Saito K."/>
            <person name="Kawai Y."/>
            <person name="Isono Y."/>
            <person name="Nakamura Y."/>
            <person name="Nagahari K."/>
            <person name="Murakami K."/>
            <person name="Yasuda T."/>
            <person name="Iwayanagi T."/>
            <person name="Wagatsuma M."/>
            <person name="Shiratori A."/>
            <person name="Sudo H."/>
            <person name="Hosoiri T."/>
            <person name="Kaku Y."/>
            <person name="Kodaira H."/>
            <person name="Kondo H."/>
            <person name="Sugawara M."/>
            <person name="Takahashi M."/>
            <person name="Kanda K."/>
            <person name="Yokoi T."/>
            <person name="Furuya T."/>
            <person name="Kikkawa E."/>
            <person name="Omura Y."/>
            <person name="Abe K."/>
            <person name="Kamihara K."/>
            <person name="Katsuta N."/>
            <person name="Sato K."/>
            <person name="Tanikawa M."/>
            <person name="Yamazaki M."/>
            <person name="Ninomiya K."/>
            <person name="Ishibashi T."/>
            <person name="Yamashita H."/>
            <person name="Murakawa K."/>
            <person name="Fujimori K."/>
            <person name="Tanai H."/>
            <person name="Kimata M."/>
            <person name="Watanabe M."/>
            <person name="Hiraoka S."/>
            <person name="Chiba Y."/>
            <person name="Ishida S."/>
            <person name="Ono Y."/>
            <person name="Takiguchi S."/>
            <person name="Watanabe S."/>
            <person name="Yosida M."/>
            <person name="Hotuta T."/>
            <person name="Kusano J."/>
            <person name="Kanehori K."/>
            <person name="Takahashi-Fujii A."/>
            <person name="Hara H."/>
            <person name="Tanase T.-O."/>
            <person name="Nomura Y."/>
            <person name="Togiya S."/>
            <person name="Komai F."/>
            <person name="Hara R."/>
            <person name="Takeuchi K."/>
            <person name="Arita M."/>
            <person name="Imose N."/>
            <person name="Musashino K."/>
            <person name="Yuuki H."/>
            <person name="Oshima A."/>
            <person name="Sasaki N."/>
            <person name="Aotsuka S."/>
            <person name="Yoshikawa Y."/>
            <person name="Matsunawa H."/>
            <person name="Ichihara T."/>
            <person name="Shiohata N."/>
            <person name="Sano S."/>
            <person name="Moriya S."/>
            <person name="Momiyama H."/>
            <person name="Satoh N."/>
            <person name="Takami S."/>
            <person name="Terashima Y."/>
            <person name="Suzuki O."/>
            <person name="Nakagawa S."/>
            <person name="Senoh A."/>
            <person name="Mizoguchi H."/>
            <person name="Goto Y."/>
            <person name="Shimizu F."/>
            <person name="Wakebe H."/>
            <person name="Hishigaki H."/>
            <person name="Watanabe T."/>
            <person name="Sugiyama A."/>
            <person name="Takemoto M."/>
            <person name="Kawakami B."/>
            <person name="Yamazaki M."/>
            <person name="Watanabe K."/>
            <person name="Kumagai A."/>
            <person name="Itakura S."/>
            <person name="Fukuzumi Y."/>
            <person name="Fujimori Y."/>
            <person name="Komiyama M."/>
            <person name="Tashiro H."/>
            <person name="Tanigami A."/>
            <person name="Fujiwara T."/>
            <person name="Ono T."/>
            <person name="Yamada K."/>
            <person name="Fujii Y."/>
            <person name="Ozaki K."/>
            <person name="Hirao M."/>
            <person name="Ohmori Y."/>
            <person name="Kawabata A."/>
            <person name="Hikiji T."/>
            <person name="Kobatake N."/>
            <person name="Inagaki H."/>
            <person name="Ikema Y."/>
            <person name="Okamoto S."/>
            <person name="Okitani R."/>
            <person name="Kawakami T."/>
            <person name="Noguchi S."/>
            <person name="Itoh T."/>
            <person name="Shigeta K."/>
            <person name="Senba T."/>
            <person name="Matsumura K."/>
            <person name="Nakajima Y."/>
            <person name="Mizuno T."/>
            <person name="Morinaga M."/>
            <person name="Sasaki M."/>
            <person name="Togashi T."/>
            <person name="Oyama M."/>
            <person name="Hata H."/>
            <person name="Watanabe M."/>
            <person name="Komatsu T."/>
            <person name="Mizushima-Sugano J."/>
            <person name="Satoh T."/>
            <person name="Shirai Y."/>
            <person name="Takahashi Y."/>
            <person name="Nakagawa K."/>
            <person name="Okumura K."/>
            <person name="Nagase T."/>
            <person name="Nomura N."/>
            <person name="Kikuchi H."/>
            <person name="Masuho Y."/>
            <person name="Yamashita R."/>
            <person name="Nakai K."/>
            <person name="Yada T."/>
            <person name="Nakamura Y."/>
            <person name="Ohara O."/>
            <person name="Isogai T."/>
            <person name="Sugano S."/>
        </authorList>
    </citation>
    <scope>NUCLEOTIDE SEQUENCE [LARGE SCALE MRNA]</scope>
    <source>
        <tissue>Tongue</tissue>
    </source>
</reference>
<reference key="2">
    <citation type="journal article" date="2004" name="Nature">
        <title>The DNA sequence and biology of human chromosome 19.</title>
        <authorList>
            <person name="Grimwood J."/>
            <person name="Gordon L.A."/>
            <person name="Olsen A.S."/>
            <person name="Terry A."/>
            <person name="Schmutz J."/>
            <person name="Lamerdin J.E."/>
            <person name="Hellsten U."/>
            <person name="Goodstein D."/>
            <person name="Couronne O."/>
            <person name="Tran-Gyamfi M."/>
            <person name="Aerts A."/>
            <person name="Altherr M."/>
            <person name="Ashworth L."/>
            <person name="Bajorek E."/>
            <person name="Black S."/>
            <person name="Branscomb E."/>
            <person name="Caenepeel S."/>
            <person name="Carrano A.V."/>
            <person name="Caoile C."/>
            <person name="Chan Y.M."/>
            <person name="Christensen M."/>
            <person name="Cleland C.A."/>
            <person name="Copeland A."/>
            <person name="Dalin E."/>
            <person name="Dehal P."/>
            <person name="Denys M."/>
            <person name="Detter J.C."/>
            <person name="Escobar J."/>
            <person name="Flowers D."/>
            <person name="Fotopulos D."/>
            <person name="Garcia C."/>
            <person name="Georgescu A.M."/>
            <person name="Glavina T."/>
            <person name="Gomez M."/>
            <person name="Gonzales E."/>
            <person name="Groza M."/>
            <person name="Hammon N."/>
            <person name="Hawkins T."/>
            <person name="Haydu L."/>
            <person name="Ho I."/>
            <person name="Huang W."/>
            <person name="Israni S."/>
            <person name="Jett J."/>
            <person name="Kadner K."/>
            <person name="Kimball H."/>
            <person name="Kobayashi A."/>
            <person name="Larionov V."/>
            <person name="Leem S.-H."/>
            <person name="Lopez F."/>
            <person name="Lou Y."/>
            <person name="Lowry S."/>
            <person name="Malfatti S."/>
            <person name="Martinez D."/>
            <person name="McCready P.M."/>
            <person name="Medina C."/>
            <person name="Morgan J."/>
            <person name="Nelson K."/>
            <person name="Nolan M."/>
            <person name="Ovcharenko I."/>
            <person name="Pitluck S."/>
            <person name="Pollard M."/>
            <person name="Popkie A.P."/>
            <person name="Predki P."/>
            <person name="Quan G."/>
            <person name="Ramirez L."/>
            <person name="Rash S."/>
            <person name="Retterer J."/>
            <person name="Rodriguez A."/>
            <person name="Rogers S."/>
            <person name="Salamov A."/>
            <person name="Salazar A."/>
            <person name="She X."/>
            <person name="Smith D."/>
            <person name="Slezak T."/>
            <person name="Solovyev V."/>
            <person name="Thayer N."/>
            <person name="Tice H."/>
            <person name="Tsai M."/>
            <person name="Ustaszewska A."/>
            <person name="Vo N."/>
            <person name="Wagner M."/>
            <person name="Wheeler J."/>
            <person name="Wu K."/>
            <person name="Xie G."/>
            <person name="Yang J."/>
            <person name="Dubchak I."/>
            <person name="Furey T.S."/>
            <person name="DeJong P."/>
            <person name="Dickson M."/>
            <person name="Gordon D."/>
            <person name="Eichler E.E."/>
            <person name="Pennacchio L.A."/>
            <person name="Richardson P."/>
            <person name="Stubbs L."/>
            <person name="Rokhsar D.S."/>
            <person name="Myers R.M."/>
            <person name="Rubin E.M."/>
            <person name="Lucas S.M."/>
        </authorList>
    </citation>
    <scope>NUCLEOTIDE SEQUENCE [LARGE SCALE GENOMIC DNA]</scope>
</reference>
<reference key="3">
    <citation type="journal article" date="2004" name="Genome Res.">
        <title>The status, quality, and expansion of the NIH full-length cDNA project: the Mammalian Gene Collection (MGC).</title>
        <authorList>
            <consortium name="The MGC Project Team"/>
        </authorList>
    </citation>
    <scope>NUCLEOTIDE SEQUENCE [LARGE SCALE MRNA]</scope>
    <scope>VARIANTS ALA-55; ARG-107; HIS-246 AND VAL-287</scope>
</reference>
<reference key="4">
    <citation type="journal article" date="2007" name="BMC Genomics">
        <title>The full-ORF clone resource of the German cDNA consortium.</title>
        <authorList>
            <person name="Bechtel S."/>
            <person name="Rosenfelder H."/>
            <person name="Duda A."/>
            <person name="Schmidt C.P."/>
            <person name="Ernst U."/>
            <person name="Wellenreuther R."/>
            <person name="Mehrle A."/>
            <person name="Schuster C."/>
            <person name="Bahr A."/>
            <person name="Bloecker H."/>
            <person name="Heubner D."/>
            <person name="Hoerlein A."/>
            <person name="Michel G."/>
            <person name="Wedler H."/>
            <person name="Koehrer K."/>
            <person name="Ottenwaelder B."/>
            <person name="Poustka A."/>
            <person name="Wiemann S."/>
            <person name="Schupp I."/>
        </authorList>
    </citation>
    <scope>NUCLEOTIDE SEQUENCE [LARGE SCALE MRNA] OF 26-600</scope>
    <scope>VARIANTS ALA-55; ARG-107 AND HIS-246</scope>
    <source>
        <tissue>Testis</tissue>
    </source>
</reference>